<reference key="1">
    <citation type="submission" date="2006-01" db="EMBL/GenBank/DDBJ databases">
        <title>Complete sequence of Anaeromyxobacter dehalogenans 2CP-C.</title>
        <authorList>
            <person name="Copeland A."/>
            <person name="Lucas S."/>
            <person name="Lapidus A."/>
            <person name="Barry K."/>
            <person name="Detter J.C."/>
            <person name="Glavina T."/>
            <person name="Hammon N."/>
            <person name="Israni S."/>
            <person name="Pitluck S."/>
            <person name="Brettin T."/>
            <person name="Bruce D."/>
            <person name="Han C."/>
            <person name="Tapia R."/>
            <person name="Gilna P."/>
            <person name="Kiss H."/>
            <person name="Schmutz J."/>
            <person name="Larimer F."/>
            <person name="Land M."/>
            <person name="Kyrpides N."/>
            <person name="Anderson I."/>
            <person name="Sanford R.A."/>
            <person name="Ritalahti K.M."/>
            <person name="Thomas H.S."/>
            <person name="Kirby J.R."/>
            <person name="Zhulin I.B."/>
            <person name="Loeffler F.E."/>
            <person name="Richardson P."/>
        </authorList>
    </citation>
    <scope>NUCLEOTIDE SEQUENCE [LARGE SCALE GENOMIC DNA]</scope>
    <source>
        <strain>2CP-C</strain>
    </source>
</reference>
<organism>
    <name type="scientific">Anaeromyxobacter dehalogenans (strain 2CP-C)</name>
    <dbReference type="NCBI Taxonomy" id="290397"/>
    <lineage>
        <taxon>Bacteria</taxon>
        <taxon>Pseudomonadati</taxon>
        <taxon>Myxococcota</taxon>
        <taxon>Myxococcia</taxon>
        <taxon>Myxococcales</taxon>
        <taxon>Cystobacterineae</taxon>
        <taxon>Anaeromyxobacteraceae</taxon>
        <taxon>Anaeromyxobacter</taxon>
    </lineage>
</organism>
<name>RF1_ANADE</name>
<comment type="function">
    <text evidence="1">Peptide chain release factor 1 directs the termination of translation in response to the peptide chain termination codons UAG and UAA.</text>
</comment>
<comment type="subcellular location">
    <subcellularLocation>
        <location evidence="1">Cytoplasm</location>
    </subcellularLocation>
</comment>
<comment type="PTM">
    <text evidence="1">Methylated by PrmC. Methylation increases the termination efficiency of RF1.</text>
</comment>
<comment type="similarity">
    <text evidence="1">Belongs to the prokaryotic/mitochondrial release factor family.</text>
</comment>
<feature type="chain" id="PRO_0000263230" description="Peptide chain release factor 1">
    <location>
        <begin position="1"/>
        <end position="370"/>
    </location>
</feature>
<feature type="region of interest" description="Disordered" evidence="2">
    <location>
        <begin position="286"/>
        <end position="310"/>
    </location>
</feature>
<feature type="compositionally biased region" description="Basic and acidic residues" evidence="2">
    <location>
        <begin position="286"/>
        <end position="296"/>
    </location>
</feature>
<feature type="modified residue" description="N5-methylglutamine" evidence="1">
    <location>
        <position position="237"/>
    </location>
</feature>
<sequence length="370" mass="41072">MLSPDVLKKLEAIEQRFEELTQLLSDPAVAGNGDRFRKVAKERASIEQTVTALRAYRKLLDDVAGNEALLGDKDPELRELAKEELAQLRPQVEPAEEQLKLYLVPKDPNDEKDVIVEIRAGAGGDEAGLFAAEVMRMYVRYAERRGWRVELMDTSGGALGGVKEATLTVSGDAVYSSLKYESGVHRVQRVPATEAQGRIHTSTVTVAVMPEAEEIDVQVNPADVEMDVFRSTGSGGQSVNTTDSAVRLTHKPTGIVVKCQQEKSQLKNRTMAMKMLRAKLFEIEQERQRSARDATRKSQVGTGDRSEKIRTYNFPQDRLTDHRVNYTRHNLPAVMDGDVQDVIDACRTFYAAQALREASRGDAGAAERRA</sequence>
<keyword id="KW-0963">Cytoplasm</keyword>
<keyword id="KW-0488">Methylation</keyword>
<keyword id="KW-0648">Protein biosynthesis</keyword>
<keyword id="KW-1185">Reference proteome</keyword>
<proteinExistence type="inferred from homology"/>
<accession>Q2IMW2</accession>
<protein>
    <recommendedName>
        <fullName evidence="1">Peptide chain release factor 1</fullName>
        <shortName evidence="1">RF-1</shortName>
    </recommendedName>
</protein>
<gene>
    <name evidence="1" type="primary">prfA</name>
    <name type="ordered locus">Adeh_0366</name>
</gene>
<dbReference type="EMBL" id="CP000251">
    <property type="protein sequence ID" value="ABC80142.1"/>
    <property type="molecule type" value="Genomic_DNA"/>
</dbReference>
<dbReference type="RefSeq" id="WP_011419425.1">
    <property type="nucleotide sequence ID" value="NC_007760.1"/>
</dbReference>
<dbReference type="SMR" id="Q2IMW2"/>
<dbReference type="STRING" id="290397.Adeh_0366"/>
<dbReference type="KEGG" id="ade:Adeh_0366"/>
<dbReference type="eggNOG" id="COG0216">
    <property type="taxonomic scope" value="Bacteria"/>
</dbReference>
<dbReference type="HOGENOM" id="CLU_036856_0_1_7"/>
<dbReference type="OrthoDB" id="9806673at2"/>
<dbReference type="Proteomes" id="UP000001935">
    <property type="component" value="Chromosome"/>
</dbReference>
<dbReference type="GO" id="GO:0005737">
    <property type="term" value="C:cytoplasm"/>
    <property type="evidence" value="ECO:0007669"/>
    <property type="project" value="UniProtKB-SubCell"/>
</dbReference>
<dbReference type="GO" id="GO:0016149">
    <property type="term" value="F:translation release factor activity, codon specific"/>
    <property type="evidence" value="ECO:0007669"/>
    <property type="project" value="UniProtKB-UniRule"/>
</dbReference>
<dbReference type="FunFam" id="3.30.160.20:FF:000004">
    <property type="entry name" value="Peptide chain release factor 1"/>
    <property type="match status" value="1"/>
</dbReference>
<dbReference type="FunFam" id="3.30.70.1660:FF:000002">
    <property type="entry name" value="Peptide chain release factor 1"/>
    <property type="match status" value="1"/>
</dbReference>
<dbReference type="Gene3D" id="3.30.160.20">
    <property type="match status" value="1"/>
</dbReference>
<dbReference type="Gene3D" id="3.30.70.1660">
    <property type="match status" value="2"/>
</dbReference>
<dbReference type="Gene3D" id="6.10.140.1950">
    <property type="match status" value="1"/>
</dbReference>
<dbReference type="HAMAP" id="MF_00093">
    <property type="entry name" value="Rel_fac_1"/>
    <property type="match status" value="1"/>
</dbReference>
<dbReference type="InterPro" id="IPR005139">
    <property type="entry name" value="PCRF"/>
</dbReference>
<dbReference type="InterPro" id="IPR000352">
    <property type="entry name" value="Pep_chain_release_fac_I"/>
</dbReference>
<dbReference type="InterPro" id="IPR045853">
    <property type="entry name" value="Pep_chain_release_fac_I_sf"/>
</dbReference>
<dbReference type="InterPro" id="IPR050057">
    <property type="entry name" value="Prokaryotic/Mito_RF"/>
</dbReference>
<dbReference type="InterPro" id="IPR004373">
    <property type="entry name" value="RF-1"/>
</dbReference>
<dbReference type="NCBIfam" id="TIGR00019">
    <property type="entry name" value="prfA"/>
    <property type="match status" value="1"/>
</dbReference>
<dbReference type="NCBIfam" id="NF001859">
    <property type="entry name" value="PRK00591.1"/>
    <property type="match status" value="1"/>
</dbReference>
<dbReference type="PANTHER" id="PTHR43804">
    <property type="entry name" value="LD18447P"/>
    <property type="match status" value="1"/>
</dbReference>
<dbReference type="PANTHER" id="PTHR43804:SF7">
    <property type="entry name" value="LD18447P"/>
    <property type="match status" value="1"/>
</dbReference>
<dbReference type="Pfam" id="PF03462">
    <property type="entry name" value="PCRF"/>
    <property type="match status" value="1"/>
</dbReference>
<dbReference type="Pfam" id="PF00472">
    <property type="entry name" value="RF-1"/>
    <property type="match status" value="1"/>
</dbReference>
<dbReference type="SMART" id="SM00937">
    <property type="entry name" value="PCRF"/>
    <property type="match status" value="1"/>
</dbReference>
<dbReference type="SUPFAM" id="SSF75620">
    <property type="entry name" value="Release factor"/>
    <property type="match status" value="1"/>
</dbReference>
<dbReference type="PROSITE" id="PS00745">
    <property type="entry name" value="RF_PROK_I"/>
    <property type="match status" value="1"/>
</dbReference>
<evidence type="ECO:0000255" key="1">
    <source>
        <dbReference type="HAMAP-Rule" id="MF_00093"/>
    </source>
</evidence>
<evidence type="ECO:0000256" key="2">
    <source>
        <dbReference type="SAM" id="MobiDB-lite"/>
    </source>
</evidence>